<dbReference type="EC" id="3.6.5.n1" evidence="1"/>
<dbReference type="EMBL" id="CR925677">
    <property type="protein sequence ID" value="CAI27811.1"/>
    <property type="molecule type" value="Genomic_DNA"/>
</dbReference>
<dbReference type="RefSeq" id="WP_011255505.1">
    <property type="nucleotide sequence ID" value="NC_006831.1"/>
</dbReference>
<dbReference type="SMR" id="Q5FHQ1"/>
<dbReference type="KEGG" id="erg:ERGA_CDS_03590"/>
<dbReference type="HOGENOM" id="CLU_009995_3_3_5"/>
<dbReference type="OrthoDB" id="9802948at2"/>
<dbReference type="Proteomes" id="UP000000533">
    <property type="component" value="Chromosome"/>
</dbReference>
<dbReference type="GO" id="GO:0005886">
    <property type="term" value="C:plasma membrane"/>
    <property type="evidence" value="ECO:0007669"/>
    <property type="project" value="UniProtKB-SubCell"/>
</dbReference>
<dbReference type="GO" id="GO:0005525">
    <property type="term" value="F:GTP binding"/>
    <property type="evidence" value="ECO:0007669"/>
    <property type="project" value="UniProtKB-UniRule"/>
</dbReference>
<dbReference type="GO" id="GO:0003924">
    <property type="term" value="F:GTPase activity"/>
    <property type="evidence" value="ECO:0007669"/>
    <property type="project" value="UniProtKB-UniRule"/>
</dbReference>
<dbReference type="GO" id="GO:0097216">
    <property type="term" value="F:guanosine tetraphosphate binding"/>
    <property type="evidence" value="ECO:0007669"/>
    <property type="project" value="UniProtKB-ARBA"/>
</dbReference>
<dbReference type="GO" id="GO:0043022">
    <property type="term" value="F:ribosome binding"/>
    <property type="evidence" value="ECO:0007669"/>
    <property type="project" value="UniProtKB-UniRule"/>
</dbReference>
<dbReference type="GO" id="GO:0003746">
    <property type="term" value="F:translation elongation factor activity"/>
    <property type="evidence" value="ECO:0007669"/>
    <property type="project" value="UniProtKB-UniRule"/>
</dbReference>
<dbReference type="GO" id="GO:0045727">
    <property type="term" value="P:positive regulation of translation"/>
    <property type="evidence" value="ECO:0007669"/>
    <property type="project" value="UniProtKB-UniRule"/>
</dbReference>
<dbReference type="CDD" id="cd03699">
    <property type="entry name" value="EF4_II"/>
    <property type="match status" value="1"/>
</dbReference>
<dbReference type="CDD" id="cd16260">
    <property type="entry name" value="EF4_III"/>
    <property type="match status" value="1"/>
</dbReference>
<dbReference type="CDD" id="cd01890">
    <property type="entry name" value="LepA"/>
    <property type="match status" value="1"/>
</dbReference>
<dbReference type="CDD" id="cd03709">
    <property type="entry name" value="lepA_C"/>
    <property type="match status" value="1"/>
</dbReference>
<dbReference type="FunFam" id="3.40.50.300:FF:000078">
    <property type="entry name" value="Elongation factor 4"/>
    <property type="match status" value="1"/>
</dbReference>
<dbReference type="FunFam" id="2.40.30.10:FF:000015">
    <property type="entry name" value="Translation factor GUF1, mitochondrial"/>
    <property type="match status" value="1"/>
</dbReference>
<dbReference type="FunFam" id="3.30.70.240:FF:000007">
    <property type="entry name" value="Translation factor GUF1, mitochondrial"/>
    <property type="match status" value="1"/>
</dbReference>
<dbReference type="FunFam" id="3.30.70.2570:FF:000001">
    <property type="entry name" value="Translation factor GUF1, mitochondrial"/>
    <property type="match status" value="1"/>
</dbReference>
<dbReference type="FunFam" id="3.30.70.870:FF:000004">
    <property type="entry name" value="Translation factor GUF1, mitochondrial"/>
    <property type="match status" value="1"/>
</dbReference>
<dbReference type="Gene3D" id="3.30.70.240">
    <property type="match status" value="1"/>
</dbReference>
<dbReference type="Gene3D" id="3.30.70.2570">
    <property type="entry name" value="Elongation factor 4, C-terminal domain"/>
    <property type="match status" value="1"/>
</dbReference>
<dbReference type="Gene3D" id="3.30.70.870">
    <property type="entry name" value="Elongation Factor G (Translational Gtpase), domain 3"/>
    <property type="match status" value="1"/>
</dbReference>
<dbReference type="Gene3D" id="3.40.50.300">
    <property type="entry name" value="P-loop containing nucleotide triphosphate hydrolases"/>
    <property type="match status" value="1"/>
</dbReference>
<dbReference type="Gene3D" id="2.40.30.10">
    <property type="entry name" value="Translation factors"/>
    <property type="match status" value="1"/>
</dbReference>
<dbReference type="HAMAP" id="MF_00071">
    <property type="entry name" value="LepA"/>
    <property type="match status" value="1"/>
</dbReference>
<dbReference type="InterPro" id="IPR006297">
    <property type="entry name" value="EF-4"/>
</dbReference>
<dbReference type="InterPro" id="IPR041095">
    <property type="entry name" value="EFG_II"/>
</dbReference>
<dbReference type="InterPro" id="IPR035647">
    <property type="entry name" value="EFG_III/V"/>
</dbReference>
<dbReference type="InterPro" id="IPR000640">
    <property type="entry name" value="EFG_V-like"/>
</dbReference>
<dbReference type="InterPro" id="IPR004161">
    <property type="entry name" value="EFTu-like_2"/>
</dbReference>
<dbReference type="InterPro" id="IPR031157">
    <property type="entry name" value="G_TR_CS"/>
</dbReference>
<dbReference type="InterPro" id="IPR038363">
    <property type="entry name" value="LepA_C_sf"/>
</dbReference>
<dbReference type="InterPro" id="IPR013842">
    <property type="entry name" value="LepA_CTD"/>
</dbReference>
<dbReference type="InterPro" id="IPR035654">
    <property type="entry name" value="LepA_IV"/>
</dbReference>
<dbReference type="InterPro" id="IPR027417">
    <property type="entry name" value="P-loop_NTPase"/>
</dbReference>
<dbReference type="InterPro" id="IPR005225">
    <property type="entry name" value="Small_GTP-bd"/>
</dbReference>
<dbReference type="InterPro" id="IPR000795">
    <property type="entry name" value="T_Tr_GTP-bd_dom"/>
</dbReference>
<dbReference type="NCBIfam" id="TIGR01393">
    <property type="entry name" value="lepA"/>
    <property type="match status" value="1"/>
</dbReference>
<dbReference type="NCBIfam" id="TIGR00231">
    <property type="entry name" value="small_GTP"/>
    <property type="match status" value="1"/>
</dbReference>
<dbReference type="PANTHER" id="PTHR43512:SF4">
    <property type="entry name" value="TRANSLATION FACTOR GUF1 HOMOLOG, CHLOROPLASTIC"/>
    <property type="match status" value="1"/>
</dbReference>
<dbReference type="PANTHER" id="PTHR43512">
    <property type="entry name" value="TRANSLATION FACTOR GUF1-RELATED"/>
    <property type="match status" value="1"/>
</dbReference>
<dbReference type="Pfam" id="PF00679">
    <property type="entry name" value="EFG_C"/>
    <property type="match status" value="1"/>
</dbReference>
<dbReference type="Pfam" id="PF14492">
    <property type="entry name" value="EFG_III"/>
    <property type="match status" value="1"/>
</dbReference>
<dbReference type="Pfam" id="PF00009">
    <property type="entry name" value="GTP_EFTU"/>
    <property type="match status" value="1"/>
</dbReference>
<dbReference type="Pfam" id="PF03144">
    <property type="entry name" value="GTP_EFTU_D2"/>
    <property type="match status" value="1"/>
</dbReference>
<dbReference type="Pfam" id="PF06421">
    <property type="entry name" value="LepA_C"/>
    <property type="match status" value="1"/>
</dbReference>
<dbReference type="PRINTS" id="PR00315">
    <property type="entry name" value="ELONGATNFCT"/>
</dbReference>
<dbReference type="SMART" id="SM00838">
    <property type="entry name" value="EFG_C"/>
    <property type="match status" value="1"/>
</dbReference>
<dbReference type="SUPFAM" id="SSF54980">
    <property type="entry name" value="EF-G C-terminal domain-like"/>
    <property type="match status" value="2"/>
</dbReference>
<dbReference type="SUPFAM" id="SSF52540">
    <property type="entry name" value="P-loop containing nucleoside triphosphate hydrolases"/>
    <property type="match status" value="1"/>
</dbReference>
<dbReference type="PROSITE" id="PS00301">
    <property type="entry name" value="G_TR_1"/>
    <property type="match status" value="1"/>
</dbReference>
<dbReference type="PROSITE" id="PS51722">
    <property type="entry name" value="G_TR_2"/>
    <property type="match status" value="1"/>
</dbReference>
<feature type="chain" id="PRO_0000224760" description="Elongation factor 4">
    <location>
        <begin position="1"/>
        <end position="598"/>
    </location>
</feature>
<feature type="domain" description="tr-type G">
    <location>
        <begin position="4"/>
        <end position="186"/>
    </location>
</feature>
<feature type="binding site" evidence="1">
    <location>
        <begin position="16"/>
        <end position="21"/>
    </location>
    <ligand>
        <name>GTP</name>
        <dbReference type="ChEBI" id="CHEBI:37565"/>
    </ligand>
</feature>
<feature type="binding site" evidence="1">
    <location>
        <begin position="133"/>
        <end position="136"/>
    </location>
    <ligand>
        <name>GTP</name>
        <dbReference type="ChEBI" id="CHEBI:37565"/>
    </ligand>
</feature>
<accession>Q5FHQ1</accession>
<sequence length="598" mass="66807">MDKINIRNFAIIAHIDHGKSTLADRLIEECNGLEKREMKDQVLDSMDIERERGITIKAQTVRLMYTAKDGKVYYLNLMDTPGHVDFSYEVSRSLAACEGSLLVVDSTQGVEAQTLANVYKAIDSNHEIIPVLNKIDLASSDPDKVKSQIEEIIGIDASESLLVSAKSGIGIKDVLEAIVSRLPAPSGNFDNPLKAILVDTWYDTYLGIVILLRVVDGVIKKGMKIVMMSSNAAYQVDNIGIFTPHKKIVDQLSVGEIGFITASIKELSDCKIGDTITEEQRRCDNPMPGFRTIHPVVFCSIFPNEAGDFERLREALKKLQLNDASFTFDIEVSSALGYGFRCGFLGMLHLEVIQERLEREFNLDLTATAPGVVYQIISKNGILREVHNPHDFGDVQDIASIKEPWICATIMVPDQYLGVVMSLCNNKRGEKVDLSYSGNTALLKYRLPLSEVVFDFYDRIKSISKGYASLDWEMDGYMDSEIAKLTILINSEPVDALACIVHKSKVEQRGREICLRLKDLIPRQQYKIAIQAAVGSKIIARETISPYRKDVTAKLYGGDVTRRMKLLEKQKKGKKRLRAIGNVNVPHNAFIQALKIID</sequence>
<reference key="1">
    <citation type="journal article" date="2006" name="J. Bacteriol.">
        <title>Comparative genomic analysis of three strains of Ehrlichia ruminantium reveals an active process of genome size plasticity.</title>
        <authorList>
            <person name="Frutos R."/>
            <person name="Viari A."/>
            <person name="Ferraz C."/>
            <person name="Morgat A."/>
            <person name="Eychenie S."/>
            <person name="Kandassamy Y."/>
            <person name="Chantal I."/>
            <person name="Bensaid A."/>
            <person name="Coissac E."/>
            <person name="Vachiery N."/>
            <person name="Demaille J."/>
            <person name="Martinez D."/>
        </authorList>
    </citation>
    <scope>NUCLEOTIDE SEQUENCE [LARGE SCALE GENOMIC DNA]</scope>
    <source>
        <strain>Gardel</strain>
    </source>
</reference>
<name>LEPA_EHRRG</name>
<comment type="function">
    <text evidence="1">Required for accurate and efficient protein synthesis under certain stress conditions. May act as a fidelity factor of the translation reaction, by catalyzing a one-codon backward translocation of tRNAs on improperly translocated ribosomes. Back-translocation proceeds from a post-translocation (POST) complex to a pre-translocation (PRE) complex, thus giving elongation factor G a second chance to translocate the tRNAs correctly. Binds to ribosomes in a GTP-dependent manner.</text>
</comment>
<comment type="catalytic activity">
    <reaction evidence="1">
        <text>GTP + H2O = GDP + phosphate + H(+)</text>
        <dbReference type="Rhea" id="RHEA:19669"/>
        <dbReference type="ChEBI" id="CHEBI:15377"/>
        <dbReference type="ChEBI" id="CHEBI:15378"/>
        <dbReference type="ChEBI" id="CHEBI:37565"/>
        <dbReference type="ChEBI" id="CHEBI:43474"/>
        <dbReference type="ChEBI" id="CHEBI:58189"/>
        <dbReference type="EC" id="3.6.5.n1"/>
    </reaction>
</comment>
<comment type="subcellular location">
    <subcellularLocation>
        <location evidence="1">Cell inner membrane</location>
        <topology evidence="1">Peripheral membrane protein</topology>
        <orientation evidence="1">Cytoplasmic side</orientation>
    </subcellularLocation>
</comment>
<comment type="similarity">
    <text evidence="1">Belongs to the TRAFAC class translation factor GTPase superfamily. Classic translation factor GTPase family. LepA subfamily.</text>
</comment>
<keyword id="KW-0997">Cell inner membrane</keyword>
<keyword id="KW-1003">Cell membrane</keyword>
<keyword id="KW-0342">GTP-binding</keyword>
<keyword id="KW-0378">Hydrolase</keyword>
<keyword id="KW-0472">Membrane</keyword>
<keyword id="KW-0547">Nucleotide-binding</keyword>
<keyword id="KW-0648">Protein biosynthesis</keyword>
<gene>
    <name evidence="1" type="primary">lepA</name>
    <name type="ordered locus">ERGA_CDS_03590</name>
</gene>
<evidence type="ECO:0000255" key="1">
    <source>
        <dbReference type="HAMAP-Rule" id="MF_00071"/>
    </source>
</evidence>
<proteinExistence type="inferred from homology"/>
<organism>
    <name type="scientific">Ehrlichia ruminantium (strain Gardel)</name>
    <dbReference type="NCBI Taxonomy" id="302409"/>
    <lineage>
        <taxon>Bacteria</taxon>
        <taxon>Pseudomonadati</taxon>
        <taxon>Pseudomonadota</taxon>
        <taxon>Alphaproteobacteria</taxon>
        <taxon>Rickettsiales</taxon>
        <taxon>Anaplasmataceae</taxon>
        <taxon>Ehrlichia</taxon>
    </lineage>
</organism>
<protein>
    <recommendedName>
        <fullName evidence="1">Elongation factor 4</fullName>
        <shortName evidence="1">EF-4</shortName>
        <ecNumber evidence="1">3.6.5.n1</ecNumber>
    </recommendedName>
    <alternativeName>
        <fullName evidence="1">Ribosomal back-translocase LepA</fullName>
    </alternativeName>
</protein>